<protein>
    <recommendedName>
        <fullName>Elongation factor G 1</fullName>
        <shortName>EF-G 1</shortName>
    </recommendedName>
</protein>
<accession>P40173</accession>
<accession>Q9L0K3</accession>
<organism>
    <name type="scientific">Streptomyces coelicolor (strain ATCC BAA-471 / A3(2) / M145)</name>
    <dbReference type="NCBI Taxonomy" id="100226"/>
    <lineage>
        <taxon>Bacteria</taxon>
        <taxon>Bacillati</taxon>
        <taxon>Actinomycetota</taxon>
        <taxon>Actinomycetes</taxon>
        <taxon>Kitasatosporales</taxon>
        <taxon>Streptomycetaceae</taxon>
        <taxon>Streptomyces</taxon>
        <taxon>Streptomyces albidoflavus group</taxon>
    </lineage>
</organism>
<keyword id="KW-0963">Cytoplasm</keyword>
<keyword id="KW-0251">Elongation factor</keyword>
<keyword id="KW-0342">GTP-binding</keyword>
<keyword id="KW-0547">Nucleotide-binding</keyword>
<keyword id="KW-0648">Protein biosynthesis</keyword>
<keyword id="KW-1185">Reference proteome</keyword>
<sequence length="708" mass="77657">MATTSLDLAKVRNIGIMAHIDAGKTTTTERILFYTGVSYKIGEVHDGAATMDWMEQEQERGITITSAATTCHWPLEDNDYTINIIDTPGHVDFTVEVERSLRVLDGAVTVFDGVAGVEPQSETVWRQADRYGVPRICFVNKLDRTGAEFHRCVDMISDRLGAQPLVMQLPIGAEADFQGVVDLVRMKALVWSADAAKGEMYDVVDIPATHTEAAEEWRGKLVEAVAENDEEVMELFLEGQEPTEEQLYAAIRRVTIASGKSSDTTVTPVFCGTAFKNKGVQPLLDAVVRYLPTPLDVEAIEGHDVKDPEVVVKRKPSEDEPLAALAFKIMSDPHLGKLTFVRVYSGRLVSGTAVLNSVKGRKERIGKIYRMHANKREEIESVGAGDIVAVMGLKQTTTGETLSDDKSPVILESMDFPAPVIQVAIEPKSKGDQEKLGVAIQRLAEEDPSFQVHTNEETGQTIIGGMGELHLEVLVDRMRREFKVEANVGKPQVAYRETIRKTVERVDYTHKKQTGGTGQFAKVQIAIEPIEGGDASYEFVNKVTGGRIPKEYIPSVDAGAQEAMQFGILAGYEMTGVRVTLIDGGYHEVDSSELAFKIAGSQAFKEAARKASPVLLEPMMAVEVTTPEDYMGDVIGDINSRRGQIQAMEERMGARVVKGLVPLSEMFGYVGDLRSKTSGRASYSMQFDSYAEVPRNVAEEIIAKAKGE</sequence>
<evidence type="ECO:0000250" key="1"/>
<evidence type="ECO:0000305" key="2"/>
<proteinExistence type="inferred from homology"/>
<reference key="1">
    <citation type="journal article" date="2002" name="Nature">
        <title>Complete genome sequence of the model actinomycete Streptomyces coelicolor A3(2).</title>
        <authorList>
            <person name="Bentley S.D."/>
            <person name="Chater K.F."/>
            <person name="Cerdeno-Tarraga A.-M."/>
            <person name="Challis G.L."/>
            <person name="Thomson N.R."/>
            <person name="James K.D."/>
            <person name="Harris D.E."/>
            <person name="Quail M.A."/>
            <person name="Kieser H."/>
            <person name="Harper D."/>
            <person name="Bateman A."/>
            <person name="Brown S."/>
            <person name="Chandra G."/>
            <person name="Chen C.W."/>
            <person name="Collins M."/>
            <person name="Cronin A."/>
            <person name="Fraser A."/>
            <person name="Goble A."/>
            <person name="Hidalgo J."/>
            <person name="Hornsby T."/>
            <person name="Howarth S."/>
            <person name="Huang C.-H."/>
            <person name="Kieser T."/>
            <person name="Larke L."/>
            <person name="Murphy L.D."/>
            <person name="Oliver K."/>
            <person name="O'Neil S."/>
            <person name="Rabbinowitsch E."/>
            <person name="Rajandream M.A."/>
            <person name="Rutherford K.M."/>
            <person name="Rutter S."/>
            <person name="Seeger K."/>
            <person name="Saunders D."/>
            <person name="Sharp S."/>
            <person name="Squares R."/>
            <person name="Squares S."/>
            <person name="Taylor K."/>
            <person name="Warren T."/>
            <person name="Wietzorrek A."/>
            <person name="Woodward J.R."/>
            <person name="Barrell B.G."/>
            <person name="Parkhill J."/>
            <person name="Hopwood D.A."/>
        </authorList>
    </citation>
    <scope>NUCLEOTIDE SEQUENCE [LARGE SCALE GENOMIC DNA]</scope>
    <source>
        <strain>ATCC BAA-471 / A3(2) / M145</strain>
    </source>
</reference>
<reference key="2">
    <citation type="journal article" date="1994" name="Biochim. Biophys. Acta">
        <title>Cloning and sequencing of the tuf genes of Streptomyces coelicolor A3(2).</title>
        <authorList>
            <person name="van Wezel G.P."/>
            <person name="Woudt L.P."/>
            <person name="Vervenne R."/>
            <person name="Verdurmen M.L."/>
            <person name="Vijgenboom E."/>
            <person name="Bosch L."/>
        </authorList>
    </citation>
    <scope>NUCLEOTIDE SEQUENCE [GENOMIC DNA] OF 616-708</scope>
    <source>
        <strain>ATCC BAA-471 / A3(2) / M145</strain>
    </source>
</reference>
<comment type="function">
    <text evidence="1">Catalyzes the GTP-dependent ribosomal translocation step during translation elongation. During this step, the ribosome changes from the pre-translocational (PRE) to the post-translocational (POST) state as the newly formed A-site-bound peptidyl-tRNA and P-site-bound deacylated tRNA move to the P and E sites, respectively. Catalyzes the coordinated movement of the two tRNA molecules, the mRNA and conformational changes in the ribosome (By similarity).</text>
</comment>
<comment type="subcellular location">
    <subcellularLocation>
        <location evidence="1">Cytoplasm</location>
    </subcellularLocation>
</comment>
<comment type="similarity">
    <text evidence="2">Belongs to the TRAFAC class translation factor GTPase superfamily. Classic translation factor GTPase family. EF-G/EF-2 subfamily.</text>
</comment>
<dbReference type="EMBL" id="AL939121">
    <property type="protein sequence ID" value="CAB81852.1"/>
    <property type="molecule type" value="Genomic_DNA"/>
</dbReference>
<dbReference type="EMBL" id="X77039">
    <property type="protein sequence ID" value="CAA54328.1"/>
    <property type="molecule type" value="Genomic_DNA"/>
</dbReference>
<dbReference type="PIR" id="S50137">
    <property type="entry name" value="S50137"/>
</dbReference>
<dbReference type="RefSeq" id="NP_628821.1">
    <property type="nucleotide sequence ID" value="NC_003888.3"/>
</dbReference>
<dbReference type="RefSeq" id="WP_003974302.1">
    <property type="nucleotide sequence ID" value="NZ_VNID01000028.1"/>
</dbReference>
<dbReference type="SMR" id="P40173"/>
<dbReference type="FunCoup" id="P40173">
    <property type="interactions" value="444"/>
</dbReference>
<dbReference type="STRING" id="100226.gene:17762310"/>
<dbReference type="PaxDb" id="100226-SCO4661"/>
<dbReference type="GeneID" id="91384371"/>
<dbReference type="KEGG" id="sco:SCO4661"/>
<dbReference type="PATRIC" id="fig|100226.15.peg.4732"/>
<dbReference type="eggNOG" id="COG0480">
    <property type="taxonomic scope" value="Bacteria"/>
</dbReference>
<dbReference type="HOGENOM" id="CLU_002794_4_1_11"/>
<dbReference type="InParanoid" id="P40173"/>
<dbReference type="OrthoDB" id="9801472at2"/>
<dbReference type="PhylomeDB" id="P40173"/>
<dbReference type="Proteomes" id="UP000001973">
    <property type="component" value="Chromosome"/>
</dbReference>
<dbReference type="GO" id="GO:0005737">
    <property type="term" value="C:cytoplasm"/>
    <property type="evidence" value="ECO:0007669"/>
    <property type="project" value="UniProtKB-SubCell"/>
</dbReference>
<dbReference type="GO" id="GO:0005525">
    <property type="term" value="F:GTP binding"/>
    <property type="evidence" value="ECO:0007669"/>
    <property type="project" value="UniProtKB-UniRule"/>
</dbReference>
<dbReference type="GO" id="GO:0003924">
    <property type="term" value="F:GTPase activity"/>
    <property type="evidence" value="ECO:0007669"/>
    <property type="project" value="InterPro"/>
</dbReference>
<dbReference type="GO" id="GO:0003746">
    <property type="term" value="F:translation elongation factor activity"/>
    <property type="evidence" value="ECO:0007669"/>
    <property type="project" value="UniProtKB-UniRule"/>
</dbReference>
<dbReference type="GO" id="GO:0032790">
    <property type="term" value="P:ribosome disassembly"/>
    <property type="evidence" value="ECO:0000318"/>
    <property type="project" value="GO_Central"/>
</dbReference>
<dbReference type="CDD" id="cd01886">
    <property type="entry name" value="EF-G"/>
    <property type="match status" value="1"/>
</dbReference>
<dbReference type="CDD" id="cd16262">
    <property type="entry name" value="EFG_III"/>
    <property type="match status" value="1"/>
</dbReference>
<dbReference type="CDD" id="cd01434">
    <property type="entry name" value="EFG_mtEFG1_IV"/>
    <property type="match status" value="1"/>
</dbReference>
<dbReference type="CDD" id="cd03713">
    <property type="entry name" value="EFG_mtEFG_C"/>
    <property type="match status" value="1"/>
</dbReference>
<dbReference type="CDD" id="cd04088">
    <property type="entry name" value="EFG_mtEFG_II"/>
    <property type="match status" value="1"/>
</dbReference>
<dbReference type="FunFam" id="2.40.30.10:FF:000006">
    <property type="entry name" value="Elongation factor G"/>
    <property type="match status" value="1"/>
</dbReference>
<dbReference type="FunFam" id="3.30.230.10:FF:000003">
    <property type="entry name" value="Elongation factor G"/>
    <property type="match status" value="1"/>
</dbReference>
<dbReference type="FunFam" id="3.30.70.240:FF:000001">
    <property type="entry name" value="Elongation factor G"/>
    <property type="match status" value="1"/>
</dbReference>
<dbReference type="FunFam" id="3.30.70.870:FF:000001">
    <property type="entry name" value="Elongation factor G"/>
    <property type="match status" value="1"/>
</dbReference>
<dbReference type="FunFam" id="3.40.50.300:FF:000029">
    <property type="entry name" value="Elongation factor G"/>
    <property type="match status" value="1"/>
</dbReference>
<dbReference type="Gene3D" id="3.30.230.10">
    <property type="match status" value="1"/>
</dbReference>
<dbReference type="Gene3D" id="3.30.70.240">
    <property type="match status" value="1"/>
</dbReference>
<dbReference type="Gene3D" id="3.30.70.870">
    <property type="entry name" value="Elongation Factor G (Translational Gtpase), domain 3"/>
    <property type="match status" value="1"/>
</dbReference>
<dbReference type="Gene3D" id="3.40.50.300">
    <property type="entry name" value="P-loop containing nucleotide triphosphate hydrolases"/>
    <property type="match status" value="1"/>
</dbReference>
<dbReference type="Gene3D" id="2.40.30.10">
    <property type="entry name" value="Translation factors"/>
    <property type="match status" value="1"/>
</dbReference>
<dbReference type="HAMAP" id="MF_00054_B">
    <property type="entry name" value="EF_G_EF_2_B"/>
    <property type="match status" value="1"/>
</dbReference>
<dbReference type="InterPro" id="IPR053905">
    <property type="entry name" value="EF-G-like_DII"/>
</dbReference>
<dbReference type="InterPro" id="IPR041095">
    <property type="entry name" value="EFG_II"/>
</dbReference>
<dbReference type="InterPro" id="IPR009022">
    <property type="entry name" value="EFG_III"/>
</dbReference>
<dbReference type="InterPro" id="IPR035647">
    <property type="entry name" value="EFG_III/V"/>
</dbReference>
<dbReference type="InterPro" id="IPR047872">
    <property type="entry name" value="EFG_IV"/>
</dbReference>
<dbReference type="InterPro" id="IPR035649">
    <property type="entry name" value="EFG_V"/>
</dbReference>
<dbReference type="InterPro" id="IPR000640">
    <property type="entry name" value="EFG_V-like"/>
</dbReference>
<dbReference type="InterPro" id="IPR031157">
    <property type="entry name" value="G_TR_CS"/>
</dbReference>
<dbReference type="InterPro" id="IPR027417">
    <property type="entry name" value="P-loop_NTPase"/>
</dbReference>
<dbReference type="InterPro" id="IPR020568">
    <property type="entry name" value="Ribosomal_Su5_D2-typ_SF"/>
</dbReference>
<dbReference type="InterPro" id="IPR014721">
    <property type="entry name" value="Ribsml_uS5_D2-typ_fold_subgr"/>
</dbReference>
<dbReference type="InterPro" id="IPR005225">
    <property type="entry name" value="Small_GTP-bd"/>
</dbReference>
<dbReference type="InterPro" id="IPR000795">
    <property type="entry name" value="T_Tr_GTP-bd_dom"/>
</dbReference>
<dbReference type="InterPro" id="IPR009000">
    <property type="entry name" value="Transl_B-barrel_sf"/>
</dbReference>
<dbReference type="InterPro" id="IPR004540">
    <property type="entry name" value="Transl_elong_EFG/EF2"/>
</dbReference>
<dbReference type="InterPro" id="IPR005517">
    <property type="entry name" value="Transl_elong_EFG/EF2_IV"/>
</dbReference>
<dbReference type="NCBIfam" id="TIGR00484">
    <property type="entry name" value="EF-G"/>
    <property type="match status" value="1"/>
</dbReference>
<dbReference type="NCBIfam" id="NF009379">
    <property type="entry name" value="PRK12740.1-3"/>
    <property type="match status" value="1"/>
</dbReference>
<dbReference type="NCBIfam" id="NF009381">
    <property type="entry name" value="PRK12740.1-5"/>
    <property type="match status" value="1"/>
</dbReference>
<dbReference type="NCBIfam" id="TIGR00231">
    <property type="entry name" value="small_GTP"/>
    <property type="match status" value="1"/>
</dbReference>
<dbReference type="PANTHER" id="PTHR43261:SF1">
    <property type="entry name" value="RIBOSOME-RELEASING FACTOR 2, MITOCHONDRIAL"/>
    <property type="match status" value="1"/>
</dbReference>
<dbReference type="PANTHER" id="PTHR43261">
    <property type="entry name" value="TRANSLATION ELONGATION FACTOR G-RELATED"/>
    <property type="match status" value="1"/>
</dbReference>
<dbReference type="Pfam" id="PF22042">
    <property type="entry name" value="EF-G_D2"/>
    <property type="match status" value="1"/>
</dbReference>
<dbReference type="Pfam" id="PF00679">
    <property type="entry name" value="EFG_C"/>
    <property type="match status" value="1"/>
</dbReference>
<dbReference type="Pfam" id="PF14492">
    <property type="entry name" value="EFG_III"/>
    <property type="match status" value="1"/>
</dbReference>
<dbReference type="Pfam" id="PF03764">
    <property type="entry name" value="EFG_IV"/>
    <property type="match status" value="1"/>
</dbReference>
<dbReference type="Pfam" id="PF00009">
    <property type="entry name" value="GTP_EFTU"/>
    <property type="match status" value="1"/>
</dbReference>
<dbReference type="PRINTS" id="PR00315">
    <property type="entry name" value="ELONGATNFCT"/>
</dbReference>
<dbReference type="SMART" id="SM00838">
    <property type="entry name" value="EFG_C"/>
    <property type="match status" value="1"/>
</dbReference>
<dbReference type="SMART" id="SM00889">
    <property type="entry name" value="EFG_IV"/>
    <property type="match status" value="1"/>
</dbReference>
<dbReference type="SUPFAM" id="SSF54980">
    <property type="entry name" value="EF-G C-terminal domain-like"/>
    <property type="match status" value="2"/>
</dbReference>
<dbReference type="SUPFAM" id="SSF52540">
    <property type="entry name" value="P-loop containing nucleoside triphosphate hydrolases"/>
    <property type="match status" value="1"/>
</dbReference>
<dbReference type="SUPFAM" id="SSF54211">
    <property type="entry name" value="Ribosomal protein S5 domain 2-like"/>
    <property type="match status" value="1"/>
</dbReference>
<dbReference type="SUPFAM" id="SSF50447">
    <property type="entry name" value="Translation proteins"/>
    <property type="match status" value="1"/>
</dbReference>
<dbReference type="PROSITE" id="PS00301">
    <property type="entry name" value="G_TR_1"/>
    <property type="match status" value="1"/>
</dbReference>
<dbReference type="PROSITE" id="PS51722">
    <property type="entry name" value="G_TR_2"/>
    <property type="match status" value="1"/>
</dbReference>
<name>EFG1_STRCO</name>
<feature type="chain" id="PRO_0000091227" description="Elongation factor G 1">
    <location>
        <begin position="1"/>
        <end position="708"/>
    </location>
</feature>
<feature type="domain" description="tr-type G">
    <location>
        <begin position="9"/>
        <end position="295"/>
    </location>
</feature>
<feature type="binding site" evidence="1">
    <location>
        <begin position="18"/>
        <end position="25"/>
    </location>
    <ligand>
        <name>GTP</name>
        <dbReference type="ChEBI" id="CHEBI:37565"/>
    </ligand>
</feature>
<feature type="binding site" evidence="1">
    <location>
        <begin position="86"/>
        <end position="90"/>
    </location>
    <ligand>
        <name>GTP</name>
        <dbReference type="ChEBI" id="CHEBI:37565"/>
    </ligand>
</feature>
<feature type="binding site" evidence="1">
    <location>
        <begin position="140"/>
        <end position="143"/>
    </location>
    <ligand>
        <name>GTP</name>
        <dbReference type="ChEBI" id="CHEBI:37565"/>
    </ligand>
</feature>
<gene>
    <name type="primary">fusA</name>
    <name type="synonym">fus</name>
    <name type="ordered locus">SCO4661</name>
    <name type="ORF">SCD840A.07</name>
</gene>